<sequence>MHILVVSVNYRTAPVEFREKLTFQAAEIERAMTTLQNQKSVLENVIVSTCNRTEIYAVVDQLHTGRYYIKKFLADWFQLEIEEVAPYLTIFEQDGAIDHLFRVTCGLDSMVVGETQILGQIKDSFLEAQQVKATGTIFNELFKQVITLAKRAHSETTIGESAMSVSYAAVELGKKIFGELTDCHVLILGAGKMGELALQNLYGSGARKVTVMNRTLSKAEVMAEKYMGHAKSLSELQCALLEADILISSTGASEYVITKEMMTKVEKMRSGRPLFMVDIAVPRDIDPAIDELEGSFLYDIDDLQGVVEANRAERLKEAEKIQFMIEEEIVLFKTWLSTLGVVPLISALRDKALAIQSETMVSLERKIPNLSDREKKVISKHTKSIINQLLKDPILVAKEIAAEEGASEKLALFAKIFDLETEEVESRAEEVEHKRVWTPSVPSL</sequence>
<keyword id="KW-0521">NADP</keyword>
<keyword id="KW-0560">Oxidoreductase</keyword>
<keyword id="KW-0627">Porphyrin biosynthesis</keyword>
<keyword id="KW-1185">Reference proteome</keyword>
<comment type="function">
    <text evidence="1">Catalyzes the NADPH-dependent reduction of glutamyl-tRNA(Glu) to glutamate 1-semialdehyde (GSA).</text>
</comment>
<comment type="catalytic activity">
    <reaction evidence="1">
        <text>(S)-4-amino-5-oxopentanoate + tRNA(Glu) + NADP(+) = L-glutamyl-tRNA(Glu) + NADPH + H(+)</text>
        <dbReference type="Rhea" id="RHEA:12344"/>
        <dbReference type="Rhea" id="RHEA-COMP:9663"/>
        <dbReference type="Rhea" id="RHEA-COMP:9680"/>
        <dbReference type="ChEBI" id="CHEBI:15378"/>
        <dbReference type="ChEBI" id="CHEBI:57501"/>
        <dbReference type="ChEBI" id="CHEBI:57783"/>
        <dbReference type="ChEBI" id="CHEBI:58349"/>
        <dbReference type="ChEBI" id="CHEBI:78442"/>
        <dbReference type="ChEBI" id="CHEBI:78520"/>
        <dbReference type="EC" id="1.2.1.70"/>
    </reaction>
</comment>
<comment type="pathway">
    <text evidence="1">Porphyrin-containing compound metabolism; protoporphyrin-IX biosynthesis; 5-aminolevulinate from L-glutamyl-tRNA(Glu): step 1/2.</text>
</comment>
<comment type="subunit">
    <text evidence="1">Homodimer.</text>
</comment>
<comment type="domain">
    <text evidence="1">Possesses an unusual extended V-shaped dimeric structure with each monomer consisting of three distinct domains arranged along a curved 'spinal' alpha-helix. The N-terminal catalytic domain specifically recognizes the glutamate moiety of the substrate. The second domain is the NADPH-binding domain, and the third C-terminal domain is responsible for dimerization.</text>
</comment>
<comment type="miscellaneous">
    <text evidence="1">During catalysis, the active site Cys acts as a nucleophile attacking the alpha-carbonyl group of tRNA-bound glutamate with the formation of a thioester intermediate between enzyme and glutamate, and the concomitant release of tRNA(Glu). The thioester intermediate is finally reduced by direct hydride transfer from NADPH, to form the product GSA.</text>
</comment>
<comment type="similarity">
    <text evidence="1">Belongs to the glutamyl-tRNA reductase family.</text>
</comment>
<organism>
    <name type="scientific">Bacillus cereus (strain ATCC 14579 / DSM 31 / CCUG 7414 / JCM 2152 / NBRC 15305 / NCIMB 9373 / NCTC 2599 / NRRL B-3711)</name>
    <dbReference type="NCBI Taxonomy" id="226900"/>
    <lineage>
        <taxon>Bacteria</taxon>
        <taxon>Bacillati</taxon>
        <taxon>Bacillota</taxon>
        <taxon>Bacilli</taxon>
        <taxon>Bacillales</taxon>
        <taxon>Bacillaceae</taxon>
        <taxon>Bacillus</taxon>
        <taxon>Bacillus cereus group</taxon>
    </lineage>
</organism>
<proteinExistence type="inferred from homology"/>
<name>HEM1_BACCR</name>
<accession>Q817Q8</accession>
<evidence type="ECO:0000255" key="1">
    <source>
        <dbReference type="HAMAP-Rule" id="MF_00087"/>
    </source>
</evidence>
<protein>
    <recommendedName>
        <fullName evidence="1">Glutamyl-tRNA reductase</fullName>
        <shortName evidence="1">GluTR</shortName>
        <ecNumber evidence="1">1.2.1.70</ecNumber>
    </recommendedName>
</protein>
<dbReference type="EC" id="1.2.1.70" evidence="1"/>
<dbReference type="EMBL" id="AE016877">
    <property type="protein sequence ID" value="AAP11386.1"/>
    <property type="molecule type" value="Genomic_DNA"/>
</dbReference>
<dbReference type="RefSeq" id="NP_834185.1">
    <property type="nucleotide sequence ID" value="NC_004722.1"/>
</dbReference>
<dbReference type="RefSeq" id="WP_000547841.1">
    <property type="nucleotide sequence ID" value="NC_004722.1"/>
</dbReference>
<dbReference type="SMR" id="Q817Q8"/>
<dbReference type="STRING" id="226900.BC_4473"/>
<dbReference type="KEGG" id="bce:BC4473"/>
<dbReference type="PATRIC" id="fig|226900.8.peg.4626"/>
<dbReference type="HOGENOM" id="CLU_035113_2_2_9"/>
<dbReference type="UniPathway" id="UPA00251">
    <property type="reaction ID" value="UER00316"/>
</dbReference>
<dbReference type="Proteomes" id="UP000001417">
    <property type="component" value="Chromosome"/>
</dbReference>
<dbReference type="GO" id="GO:0008883">
    <property type="term" value="F:glutamyl-tRNA reductase activity"/>
    <property type="evidence" value="ECO:0007669"/>
    <property type="project" value="UniProtKB-UniRule"/>
</dbReference>
<dbReference type="GO" id="GO:0050661">
    <property type="term" value="F:NADP binding"/>
    <property type="evidence" value="ECO:0007669"/>
    <property type="project" value="InterPro"/>
</dbReference>
<dbReference type="GO" id="GO:0006782">
    <property type="term" value="P:protoporphyrinogen IX biosynthetic process"/>
    <property type="evidence" value="ECO:0007669"/>
    <property type="project" value="UniProtKB-UniRule"/>
</dbReference>
<dbReference type="CDD" id="cd05213">
    <property type="entry name" value="NAD_bind_Glutamyl_tRNA_reduct"/>
    <property type="match status" value="1"/>
</dbReference>
<dbReference type="FunFam" id="3.30.460.30:FF:000001">
    <property type="entry name" value="Glutamyl-tRNA reductase"/>
    <property type="match status" value="1"/>
</dbReference>
<dbReference type="FunFam" id="3.40.50.720:FF:000031">
    <property type="entry name" value="Glutamyl-tRNA reductase"/>
    <property type="match status" value="1"/>
</dbReference>
<dbReference type="Gene3D" id="3.30.460.30">
    <property type="entry name" value="Glutamyl-tRNA reductase, N-terminal domain"/>
    <property type="match status" value="1"/>
</dbReference>
<dbReference type="Gene3D" id="3.40.50.720">
    <property type="entry name" value="NAD(P)-binding Rossmann-like Domain"/>
    <property type="match status" value="1"/>
</dbReference>
<dbReference type="HAMAP" id="MF_00087">
    <property type="entry name" value="Glu_tRNA_reductase"/>
    <property type="match status" value="1"/>
</dbReference>
<dbReference type="InterPro" id="IPR000343">
    <property type="entry name" value="4pyrrol_synth_GluRdtase"/>
</dbReference>
<dbReference type="InterPro" id="IPR015896">
    <property type="entry name" value="4pyrrol_synth_GluRdtase_dimer"/>
</dbReference>
<dbReference type="InterPro" id="IPR015895">
    <property type="entry name" value="4pyrrol_synth_GluRdtase_N"/>
</dbReference>
<dbReference type="InterPro" id="IPR018214">
    <property type="entry name" value="GluRdtase_CS"/>
</dbReference>
<dbReference type="InterPro" id="IPR036453">
    <property type="entry name" value="GluRdtase_dimer_dom_sf"/>
</dbReference>
<dbReference type="InterPro" id="IPR036343">
    <property type="entry name" value="GluRdtase_N_sf"/>
</dbReference>
<dbReference type="InterPro" id="IPR036291">
    <property type="entry name" value="NAD(P)-bd_dom_sf"/>
</dbReference>
<dbReference type="InterPro" id="IPR006151">
    <property type="entry name" value="Shikm_DH/Glu-tRNA_Rdtase"/>
</dbReference>
<dbReference type="NCBIfam" id="TIGR01035">
    <property type="entry name" value="hemA"/>
    <property type="match status" value="1"/>
</dbReference>
<dbReference type="PANTHER" id="PTHR43120">
    <property type="entry name" value="GLUTAMYL-TRNA REDUCTASE 1, CHLOROPLASTIC"/>
    <property type="match status" value="1"/>
</dbReference>
<dbReference type="PANTHER" id="PTHR43120:SF1">
    <property type="entry name" value="GLUTAMYL-TRNA REDUCTASE 1, CHLOROPLASTIC"/>
    <property type="match status" value="1"/>
</dbReference>
<dbReference type="Pfam" id="PF00745">
    <property type="entry name" value="GlutR_dimer"/>
    <property type="match status" value="1"/>
</dbReference>
<dbReference type="Pfam" id="PF05201">
    <property type="entry name" value="GlutR_N"/>
    <property type="match status" value="1"/>
</dbReference>
<dbReference type="Pfam" id="PF01488">
    <property type="entry name" value="Shikimate_DH"/>
    <property type="match status" value="1"/>
</dbReference>
<dbReference type="PIRSF" id="PIRSF000445">
    <property type="entry name" value="4pyrrol_synth_GluRdtase"/>
    <property type="match status" value="1"/>
</dbReference>
<dbReference type="SUPFAM" id="SSF69742">
    <property type="entry name" value="Glutamyl tRNA-reductase catalytic, N-terminal domain"/>
    <property type="match status" value="1"/>
</dbReference>
<dbReference type="SUPFAM" id="SSF69075">
    <property type="entry name" value="Glutamyl tRNA-reductase dimerization domain"/>
    <property type="match status" value="1"/>
</dbReference>
<dbReference type="SUPFAM" id="SSF51735">
    <property type="entry name" value="NAD(P)-binding Rossmann-fold domains"/>
    <property type="match status" value="1"/>
</dbReference>
<dbReference type="PROSITE" id="PS00747">
    <property type="entry name" value="GLUTR"/>
    <property type="match status" value="1"/>
</dbReference>
<gene>
    <name evidence="1" type="primary">hemA</name>
    <name type="ordered locus">BC_4473</name>
</gene>
<feature type="chain" id="PRO_0000113990" description="Glutamyl-tRNA reductase">
    <location>
        <begin position="1"/>
        <end position="444"/>
    </location>
</feature>
<feature type="active site" description="Nucleophile" evidence="1">
    <location>
        <position position="50"/>
    </location>
</feature>
<feature type="binding site" evidence="1">
    <location>
        <begin position="49"/>
        <end position="52"/>
    </location>
    <ligand>
        <name>substrate</name>
    </ligand>
</feature>
<feature type="binding site" evidence="1">
    <location>
        <position position="109"/>
    </location>
    <ligand>
        <name>substrate</name>
    </ligand>
</feature>
<feature type="binding site" evidence="1">
    <location>
        <begin position="114"/>
        <end position="116"/>
    </location>
    <ligand>
        <name>substrate</name>
    </ligand>
</feature>
<feature type="binding site" evidence="1">
    <location>
        <position position="120"/>
    </location>
    <ligand>
        <name>substrate</name>
    </ligand>
</feature>
<feature type="binding site" evidence="1">
    <location>
        <begin position="189"/>
        <end position="194"/>
    </location>
    <ligand>
        <name>NADP(+)</name>
        <dbReference type="ChEBI" id="CHEBI:58349"/>
    </ligand>
</feature>
<feature type="site" description="Important for activity" evidence="1">
    <location>
        <position position="99"/>
    </location>
</feature>
<reference key="1">
    <citation type="journal article" date="2003" name="Nature">
        <title>Genome sequence of Bacillus cereus and comparative analysis with Bacillus anthracis.</title>
        <authorList>
            <person name="Ivanova N."/>
            <person name="Sorokin A."/>
            <person name="Anderson I."/>
            <person name="Galleron N."/>
            <person name="Candelon B."/>
            <person name="Kapatral V."/>
            <person name="Bhattacharyya A."/>
            <person name="Reznik G."/>
            <person name="Mikhailova N."/>
            <person name="Lapidus A."/>
            <person name="Chu L."/>
            <person name="Mazur M."/>
            <person name="Goltsman E."/>
            <person name="Larsen N."/>
            <person name="D'Souza M."/>
            <person name="Walunas T."/>
            <person name="Grechkin Y."/>
            <person name="Pusch G."/>
            <person name="Haselkorn R."/>
            <person name="Fonstein M."/>
            <person name="Ehrlich S.D."/>
            <person name="Overbeek R."/>
            <person name="Kyrpides N.C."/>
        </authorList>
    </citation>
    <scope>NUCLEOTIDE SEQUENCE [LARGE SCALE GENOMIC DNA]</scope>
    <source>
        <strain>ATCC 14579 / DSM 31 / CCUG 7414 / JCM 2152 / NBRC 15305 / NCIMB 9373 / NCTC 2599 / NRRL B-3711</strain>
    </source>
</reference>